<keyword id="KW-0349">Heme</keyword>
<keyword id="KW-0408">Iron</keyword>
<keyword id="KW-0479">Metal-binding</keyword>
<keyword id="KW-0503">Monooxygenase</keyword>
<keyword id="KW-0539">Nucleus</keyword>
<keyword id="KW-0560">Oxidoreductase</keyword>
<protein>
    <recommendedName>
        <fullName evidence="6">Trans-cinnamate 4-monooxygenase C4H2</fullName>
        <ecNumber evidence="1">1.14.14.91</ecNumber>
    </recommendedName>
    <alternativeName>
        <fullName evidence="5">Cinnamate-4-hydroxylase 2</fullName>
        <shortName evidence="5">PhC4H2</shortName>
    </alternativeName>
    <alternativeName>
        <fullName evidence="6">Cytochrome P450 C4H2</fullName>
    </alternativeName>
</protein>
<reference key="1">
    <citation type="journal article" date="2011" name="J. Exp. Bot.">
        <title>PhMYB4 fine-tunes the floral volatile signature of Petunia x hybrida through PhC4H.</title>
        <authorList>
            <person name="Colquhoun T.A."/>
            <person name="Kim J.Y."/>
            <person name="Wedde A.E."/>
            <person name="Levin L.A."/>
            <person name="Schmitt K.C."/>
            <person name="Schuurink R.C."/>
            <person name="Clark D.G."/>
        </authorList>
    </citation>
    <scope>NUCLEOTIDE SEQUENCE [MRNA]</scope>
    <scope>REPRESSION BY MYB4</scope>
    <scope>DEVELOPMENTAL STAGE</scope>
    <source>
        <strain>cv. Mitchell</strain>
    </source>
</reference>
<name>C4H2_PETHY</name>
<feature type="chain" id="PRO_0000451517" description="Trans-cinnamate 4-monooxygenase C4H2">
    <location>
        <begin position="1"/>
        <end position="505"/>
    </location>
</feature>
<feature type="short sequence motif" description="Nuclear localization signal 1" evidence="3">
    <location>
        <begin position="161"/>
        <end position="168"/>
    </location>
</feature>
<feature type="short sequence motif" description="Nuclear localization signal 2" evidence="3">
    <location>
        <begin position="247"/>
        <end position="254"/>
    </location>
</feature>
<feature type="binding site" description="axial binding residue" evidence="2">
    <location>
        <position position="447"/>
    </location>
    <ligand>
        <name>heme</name>
        <dbReference type="ChEBI" id="CHEBI:30413"/>
    </ligand>
    <ligandPart>
        <name>Fe</name>
        <dbReference type="ChEBI" id="CHEBI:18248"/>
    </ligandPart>
</feature>
<dbReference type="EC" id="1.14.14.91" evidence="1"/>
<dbReference type="EMBL" id="HM447145">
    <property type="protein sequence ID" value="ADX33333.1"/>
    <property type="molecule type" value="mRNA"/>
</dbReference>
<dbReference type="SMR" id="F1B283"/>
<dbReference type="UniPathway" id="UPA00825">
    <property type="reaction ID" value="UER00789"/>
</dbReference>
<dbReference type="GO" id="GO:0005634">
    <property type="term" value="C:nucleus"/>
    <property type="evidence" value="ECO:0007669"/>
    <property type="project" value="UniProtKB-SubCell"/>
</dbReference>
<dbReference type="GO" id="GO:0020037">
    <property type="term" value="F:heme binding"/>
    <property type="evidence" value="ECO:0007669"/>
    <property type="project" value="InterPro"/>
</dbReference>
<dbReference type="GO" id="GO:0005506">
    <property type="term" value="F:iron ion binding"/>
    <property type="evidence" value="ECO:0007669"/>
    <property type="project" value="InterPro"/>
</dbReference>
<dbReference type="GO" id="GO:0016710">
    <property type="term" value="F:trans-cinnamate 4-monooxygenase activity"/>
    <property type="evidence" value="ECO:0007669"/>
    <property type="project" value="UniProtKB-EC"/>
</dbReference>
<dbReference type="GO" id="GO:0009808">
    <property type="term" value="P:lignin metabolic process"/>
    <property type="evidence" value="ECO:0007669"/>
    <property type="project" value="TreeGrafter"/>
</dbReference>
<dbReference type="CDD" id="cd11074">
    <property type="entry name" value="CYP73"/>
    <property type="match status" value="1"/>
</dbReference>
<dbReference type="FunFam" id="1.10.630.10:FF:000013">
    <property type="entry name" value="Trans-cinnamate 4-monooxygenase"/>
    <property type="match status" value="1"/>
</dbReference>
<dbReference type="Gene3D" id="1.10.630.10">
    <property type="entry name" value="Cytochrome P450"/>
    <property type="match status" value="1"/>
</dbReference>
<dbReference type="InterPro" id="IPR001128">
    <property type="entry name" value="Cyt_P450"/>
</dbReference>
<dbReference type="InterPro" id="IPR017972">
    <property type="entry name" value="Cyt_P450_CS"/>
</dbReference>
<dbReference type="InterPro" id="IPR002401">
    <property type="entry name" value="Cyt_P450_E_grp-I"/>
</dbReference>
<dbReference type="InterPro" id="IPR036396">
    <property type="entry name" value="Cyt_P450_sf"/>
</dbReference>
<dbReference type="PANTHER" id="PTHR47948">
    <property type="entry name" value="TRANS-CINNAMATE 4-MONOOXYGENASE"/>
    <property type="match status" value="1"/>
</dbReference>
<dbReference type="PANTHER" id="PTHR47948:SF4">
    <property type="entry name" value="TRANS-CINNAMATE 4-MONOOXYGENASE"/>
    <property type="match status" value="1"/>
</dbReference>
<dbReference type="Pfam" id="PF00067">
    <property type="entry name" value="p450"/>
    <property type="match status" value="1"/>
</dbReference>
<dbReference type="PRINTS" id="PR00463">
    <property type="entry name" value="EP450I"/>
</dbReference>
<dbReference type="PRINTS" id="PR00385">
    <property type="entry name" value="P450"/>
</dbReference>
<dbReference type="SUPFAM" id="SSF48264">
    <property type="entry name" value="Cytochrome P450"/>
    <property type="match status" value="1"/>
</dbReference>
<dbReference type="PROSITE" id="PS00086">
    <property type="entry name" value="CYTOCHROME_P450"/>
    <property type="match status" value="1"/>
</dbReference>
<accession>F1B283</accession>
<gene>
    <name evidence="5" type="primary">C4H2</name>
</gene>
<sequence>MDLLLLEKTLIGLFIAIIIATIVSKLRSKRFKLPPGPIPVPVFGNWLQVGDDLNHRNLTEYAKKFGDLFLLRMGQRNLVVVSSPDLAKEVLHTQGVEFGSRTRNVVFDIFTGKGQDMVFTVYGEHWRKMRRIMTVPFFTNKVVQQYRGGWEYEVESVVEDVKKMKESNTNGIVLRKRLQLMMYNNMFRIMFDRRFESEDDPLFVKLKALNGERSRLAQSFEYNYGDFIPILRPFLRGYLKICKEVKEKRLKLFKDYFVDERKKLANTKSMDSNALKCAIDHILEAQQKGEINEDNVLYIVENINVAAIETTLWSIEWGIAELVNHPHIQKKLRDEIDTVLGPGVQVTEPDTHKLPYLQAVIKETLRLRMAIPLLVPHMNLHEAKLGGYDIPAESKILVNAWWLANNPAHWKNPEEFRPERFFEEEKHVEANGNDFRYLPFGVGRRSCPGIILALPILGITLGRLVQNFELLPPPGQSKIDTTEKGGQFSLHILKHSTIVLKPRSF</sequence>
<organism>
    <name type="scientific">Petunia hybrida</name>
    <name type="common">Petunia</name>
    <dbReference type="NCBI Taxonomy" id="4102"/>
    <lineage>
        <taxon>Eukaryota</taxon>
        <taxon>Viridiplantae</taxon>
        <taxon>Streptophyta</taxon>
        <taxon>Embryophyta</taxon>
        <taxon>Tracheophyta</taxon>
        <taxon>Spermatophyta</taxon>
        <taxon>Magnoliopsida</taxon>
        <taxon>eudicotyledons</taxon>
        <taxon>Gunneridae</taxon>
        <taxon>Pentapetalae</taxon>
        <taxon>asterids</taxon>
        <taxon>lamiids</taxon>
        <taxon>Solanales</taxon>
        <taxon>Solanaceae</taxon>
        <taxon>Petunioideae</taxon>
        <taxon>Petunia</taxon>
    </lineage>
</organism>
<proteinExistence type="evidence at transcript level"/>
<evidence type="ECO:0000250" key="1">
    <source>
        <dbReference type="UniProtKB" id="Q04468"/>
    </source>
</evidence>
<evidence type="ECO:0000250" key="2">
    <source>
        <dbReference type="UniProtKB" id="Q8RN03"/>
    </source>
</evidence>
<evidence type="ECO:0000255" key="3">
    <source>
        <dbReference type="PROSITE-ProRule" id="PRU00768"/>
    </source>
</evidence>
<evidence type="ECO:0000269" key="4">
    <source>
    </source>
</evidence>
<evidence type="ECO:0000303" key="5">
    <source>
    </source>
</evidence>
<evidence type="ECO:0000305" key="6"/>
<comment type="function">
    <text evidence="1">Component of the floral volatile benzenoid/phenylpropanoid (FVBP) biosynthetic pathway that controls carbon flux to pigments essential for pollination or UV protection, to numerous pytoalexins synthesized by plants when challenged by pathogens, and to lignins.</text>
</comment>
<comment type="catalytic activity">
    <reaction evidence="1">
        <text>(E)-cinnamate + reduced [NADPH--hemoprotein reductase] + O2 = (E)-4-coumarate + oxidized [NADPH--hemoprotein reductase] + H2O + H(+)</text>
        <dbReference type="Rhea" id="RHEA:10608"/>
        <dbReference type="Rhea" id="RHEA-COMP:11964"/>
        <dbReference type="Rhea" id="RHEA-COMP:11965"/>
        <dbReference type="ChEBI" id="CHEBI:12876"/>
        <dbReference type="ChEBI" id="CHEBI:15377"/>
        <dbReference type="ChEBI" id="CHEBI:15378"/>
        <dbReference type="ChEBI" id="CHEBI:15379"/>
        <dbReference type="ChEBI" id="CHEBI:15669"/>
        <dbReference type="ChEBI" id="CHEBI:57618"/>
        <dbReference type="ChEBI" id="CHEBI:58210"/>
        <dbReference type="EC" id="1.14.14.91"/>
    </reaction>
</comment>
<comment type="cofactor">
    <cofactor evidence="2">
        <name>heme</name>
        <dbReference type="ChEBI" id="CHEBI:30413"/>
    </cofactor>
</comment>
<comment type="pathway">
    <text evidence="1">Phenylpropanoid metabolism; trans-4-coumarate biosynthesis; trans-4-coumarate from trans-cinnamate: step 1/1.</text>
</comment>
<comment type="subcellular location">
    <subcellularLocation>
        <location evidence="3">Nucleus</location>
    </subcellularLocation>
</comment>
<comment type="developmental stage">
    <text evidence="4">In corollas, accumulates progressively during flower development, from buds to anthesis, with a peak at flower opening, but fades out in senescing flowers.</text>
</comment>
<comment type="induction">
    <text evidence="4">Repressed by MYB4.</text>
</comment>
<comment type="similarity">
    <text evidence="6">Belongs to the cytochrome P450 family.</text>
</comment>